<feature type="chain" id="PRO_0000299278" description="Auxin response factor 19">
    <location>
        <begin position="1"/>
        <end position="1161"/>
    </location>
</feature>
<feature type="domain" description="PB1" evidence="3">
    <location>
        <begin position="1027"/>
        <end position="1111"/>
    </location>
</feature>
<feature type="DNA-binding region" description="TF-B3" evidence="2">
    <location>
        <begin position="154"/>
        <end position="256"/>
    </location>
</feature>
<feature type="region of interest" description="Disordered" evidence="4">
    <location>
        <begin position="1"/>
        <end position="20"/>
    </location>
</feature>
<feature type="region of interest" description="Disordered" evidence="4">
    <location>
        <begin position="573"/>
        <end position="598"/>
    </location>
</feature>
<feature type="splice variant" id="VSP_039448" description="In isoform 2." evidence="6">
    <location>
        <begin position="721"/>
        <end position="890"/>
    </location>
</feature>
<feature type="sequence conflict" description="In Ref. 4; AK103312." evidence="7" ref="4">
    <original>V</original>
    <variation>I</variation>
    <location>
        <position position="241"/>
    </location>
</feature>
<protein>
    <recommendedName>
        <fullName>Auxin response factor 19</fullName>
    </recommendedName>
    <alternativeName>
        <fullName>OsARF7a</fullName>
    </alternativeName>
</protein>
<comment type="function">
    <text>Auxin response factors (ARFs) are transcriptional factors that bind specifically to the DNA sequence 5'-TGTCTC-3' found in the auxin-responsive promoter elements (AuxREs).</text>
</comment>
<comment type="subunit">
    <text evidence="1">Homodimers and heterodimers.</text>
</comment>
<comment type="subcellular location">
    <subcellularLocation>
        <location evidence="2">Nucleus</location>
    </subcellularLocation>
</comment>
<comment type="alternative products">
    <event type="alternative splicing"/>
    <isoform>
        <id>Q0D9R7-1</id>
        <name>1</name>
        <sequence type="displayed"/>
    </isoform>
    <isoform>
        <id>Q0D9R7-2</id>
        <name>2</name>
        <sequence type="described" ref="VSP_039448"/>
    </isoform>
</comment>
<comment type="tissue specificity">
    <text evidence="5">Expressed in roots, culms, leaves and young panicles.</text>
</comment>
<comment type="domain">
    <text>Interactions between auxin response factors (ARFs) and Aux/IAA proteins occur through their C-terminal dimerization domains III and IV.</text>
</comment>
<comment type="similarity">
    <text evidence="7">Belongs to the ARF family.</text>
</comment>
<accession>Q0D9R7</accession>
<accession>Q5Z826</accession>
<accession>Q8S979</accession>
<evidence type="ECO:0000250" key="1"/>
<evidence type="ECO:0000255" key="2">
    <source>
        <dbReference type="PROSITE-ProRule" id="PRU00326"/>
    </source>
</evidence>
<evidence type="ECO:0000255" key="3">
    <source>
        <dbReference type="PROSITE-ProRule" id="PRU01081"/>
    </source>
</evidence>
<evidence type="ECO:0000256" key="4">
    <source>
        <dbReference type="SAM" id="MobiDB-lite"/>
    </source>
</evidence>
<evidence type="ECO:0000269" key="5">
    <source>
    </source>
</evidence>
<evidence type="ECO:0000303" key="6">
    <source>
    </source>
</evidence>
<evidence type="ECO:0000305" key="7"/>
<dbReference type="EMBL" id="AP003726">
    <property type="protein sequence ID" value="BAD53792.1"/>
    <property type="molecule type" value="Genomic_DNA"/>
</dbReference>
<dbReference type="EMBL" id="AP004324">
    <property type="protein sequence ID" value="BAD54030.1"/>
    <property type="molecule type" value="Genomic_DNA"/>
</dbReference>
<dbReference type="EMBL" id="AP008212">
    <property type="protein sequence ID" value="BAF20406.2"/>
    <property type="molecule type" value="Genomic_DNA"/>
</dbReference>
<dbReference type="EMBL" id="AP014962">
    <property type="protein sequence ID" value="BAS99363.1"/>
    <property type="molecule type" value="Genomic_DNA"/>
</dbReference>
<dbReference type="EMBL" id="AK103312">
    <property type="status" value="NOT_ANNOTATED_CDS"/>
    <property type="molecule type" value="mRNA"/>
</dbReference>
<dbReference type="EMBL" id="AB071296">
    <property type="protein sequence ID" value="BAB85916.1"/>
    <property type="molecule type" value="mRNA"/>
</dbReference>
<dbReference type="RefSeq" id="XP_015643493.1">
    <property type="nucleotide sequence ID" value="XM_015788007.1"/>
</dbReference>
<dbReference type="SMR" id="Q0D9R7"/>
<dbReference type="FunCoup" id="Q0D9R7">
    <property type="interactions" value="2293"/>
</dbReference>
<dbReference type="STRING" id="39947.Q0D9R7"/>
<dbReference type="PaxDb" id="39947-Q0D9R7"/>
<dbReference type="KEGG" id="dosa:Os06g0702600"/>
<dbReference type="eggNOG" id="ENOG502QV9B">
    <property type="taxonomic scope" value="Eukaryota"/>
</dbReference>
<dbReference type="InParanoid" id="Q0D9R7"/>
<dbReference type="OMA" id="MSLEGCD"/>
<dbReference type="OrthoDB" id="2016915at2759"/>
<dbReference type="PlantReactome" id="R-OSA-9030654">
    <property type="pathway name" value="Primary root development"/>
</dbReference>
<dbReference type="Proteomes" id="UP000000763">
    <property type="component" value="Chromosome 6"/>
</dbReference>
<dbReference type="Proteomes" id="UP000059680">
    <property type="component" value="Chromosome 6"/>
</dbReference>
<dbReference type="GO" id="GO:0005634">
    <property type="term" value="C:nucleus"/>
    <property type="evidence" value="ECO:0007669"/>
    <property type="project" value="UniProtKB-SubCell"/>
</dbReference>
<dbReference type="GO" id="GO:0003677">
    <property type="term" value="F:DNA binding"/>
    <property type="evidence" value="ECO:0007669"/>
    <property type="project" value="UniProtKB-KW"/>
</dbReference>
<dbReference type="GO" id="GO:0009734">
    <property type="term" value="P:auxin-activated signaling pathway"/>
    <property type="evidence" value="ECO:0007669"/>
    <property type="project" value="UniProtKB-KW"/>
</dbReference>
<dbReference type="GO" id="GO:0006355">
    <property type="term" value="P:regulation of DNA-templated transcription"/>
    <property type="evidence" value="ECO:0007669"/>
    <property type="project" value="InterPro"/>
</dbReference>
<dbReference type="CDD" id="cd10017">
    <property type="entry name" value="B3_DNA"/>
    <property type="match status" value="1"/>
</dbReference>
<dbReference type="FunFam" id="2.30.30.1040:FF:000001">
    <property type="entry name" value="Auxin response factor"/>
    <property type="match status" value="1"/>
</dbReference>
<dbReference type="FunFam" id="2.40.330.10:FF:000001">
    <property type="entry name" value="Auxin response factor"/>
    <property type="match status" value="1"/>
</dbReference>
<dbReference type="FunFam" id="3.10.20.90:FF:000047">
    <property type="entry name" value="Auxin response factor"/>
    <property type="match status" value="1"/>
</dbReference>
<dbReference type="Gene3D" id="2.30.30.1040">
    <property type="match status" value="1"/>
</dbReference>
<dbReference type="Gene3D" id="2.40.330.10">
    <property type="entry name" value="DNA-binding pseudobarrel domain"/>
    <property type="match status" value="1"/>
</dbReference>
<dbReference type="Gene3D" id="3.10.20.90">
    <property type="entry name" value="Phosphatidylinositol 3-kinase Catalytic Subunit, Chain A, domain 1"/>
    <property type="match status" value="1"/>
</dbReference>
<dbReference type="InterPro" id="IPR010525">
    <property type="entry name" value="ARF_dom"/>
</dbReference>
<dbReference type="InterPro" id="IPR044835">
    <property type="entry name" value="ARF_plant"/>
</dbReference>
<dbReference type="InterPro" id="IPR033389">
    <property type="entry name" value="AUX/IAA_dom"/>
</dbReference>
<dbReference type="InterPro" id="IPR003340">
    <property type="entry name" value="B3_DNA-bd"/>
</dbReference>
<dbReference type="InterPro" id="IPR015300">
    <property type="entry name" value="DNA-bd_pseudobarrel_sf"/>
</dbReference>
<dbReference type="InterPro" id="IPR053793">
    <property type="entry name" value="PB1-like"/>
</dbReference>
<dbReference type="PANTHER" id="PTHR31384:SF9">
    <property type="entry name" value="AUXIN RESPONSE FACTOR 19"/>
    <property type="match status" value="1"/>
</dbReference>
<dbReference type="PANTHER" id="PTHR31384">
    <property type="entry name" value="AUXIN RESPONSE FACTOR 4-RELATED"/>
    <property type="match status" value="1"/>
</dbReference>
<dbReference type="Pfam" id="PF06507">
    <property type="entry name" value="ARF_AD"/>
    <property type="match status" value="1"/>
</dbReference>
<dbReference type="Pfam" id="PF02309">
    <property type="entry name" value="AUX_IAA"/>
    <property type="match status" value="1"/>
</dbReference>
<dbReference type="Pfam" id="PF02362">
    <property type="entry name" value="B3"/>
    <property type="match status" value="1"/>
</dbReference>
<dbReference type="SMART" id="SM01019">
    <property type="entry name" value="B3"/>
    <property type="match status" value="1"/>
</dbReference>
<dbReference type="SUPFAM" id="SSF54277">
    <property type="entry name" value="CAD &amp; PB1 domains"/>
    <property type="match status" value="1"/>
</dbReference>
<dbReference type="SUPFAM" id="SSF101936">
    <property type="entry name" value="DNA-binding pseudobarrel domain"/>
    <property type="match status" value="1"/>
</dbReference>
<dbReference type="PROSITE" id="PS50863">
    <property type="entry name" value="B3"/>
    <property type="match status" value="1"/>
</dbReference>
<dbReference type="PROSITE" id="PS51745">
    <property type="entry name" value="PB1"/>
    <property type="match status" value="1"/>
</dbReference>
<proteinExistence type="evidence at transcript level"/>
<keyword id="KW-0025">Alternative splicing</keyword>
<keyword id="KW-0927">Auxin signaling pathway</keyword>
<keyword id="KW-0238">DNA-binding</keyword>
<keyword id="KW-0539">Nucleus</keyword>
<keyword id="KW-1185">Reference proteome</keyword>
<keyword id="KW-0804">Transcription</keyword>
<keyword id="KW-0805">Transcription regulation</keyword>
<gene>
    <name type="primary">ARF19</name>
    <name type="synonym">ARF7A</name>
    <name type="ordered locus">Os06g0702600</name>
    <name type="ordered locus">LOC_Os06g48950</name>
    <name type="ORF">OJ1215_E11.1</name>
    <name type="ORF">P0596H10.43</name>
</gene>
<reference key="1">
    <citation type="journal article" date="2005" name="Nature">
        <title>The map-based sequence of the rice genome.</title>
        <authorList>
            <consortium name="International rice genome sequencing project (IRGSP)"/>
        </authorList>
    </citation>
    <scope>NUCLEOTIDE SEQUENCE [LARGE SCALE GENOMIC DNA]</scope>
    <source>
        <strain>cv. Nipponbare</strain>
    </source>
</reference>
<reference key="2">
    <citation type="journal article" date="2008" name="Nucleic Acids Res.">
        <title>The rice annotation project database (RAP-DB): 2008 update.</title>
        <authorList>
            <consortium name="The rice annotation project (RAP)"/>
        </authorList>
    </citation>
    <scope>GENOME REANNOTATION</scope>
    <source>
        <strain>cv. Nipponbare</strain>
    </source>
</reference>
<reference key="3">
    <citation type="journal article" date="2013" name="Rice">
        <title>Improvement of the Oryza sativa Nipponbare reference genome using next generation sequence and optical map data.</title>
        <authorList>
            <person name="Kawahara Y."/>
            <person name="de la Bastide M."/>
            <person name="Hamilton J.P."/>
            <person name="Kanamori H."/>
            <person name="McCombie W.R."/>
            <person name="Ouyang S."/>
            <person name="Schwartz D.C."/>
            <person name="Tanaka T."/>
            <person name="Wu J."/>
            <person name="Zhou S."/>
            <person name="Childs K.L."/>
            <person name="Davidson R.M."/>
            <person name="Lin H."/>
            <person name="Quesada-Ocampo L."/>
            <person name="Vaillancourt B."/>
            <person name="Sakai H."/>
            <person name="Lee S.S."/>
            <person name="Kim J."/>
            <person name="Numa H."/>
            <person name="Itoh T."/>
            <person name="Buell C.R."/>
            <person name="Matsumoto T."/>
        </authorList>
    </citation>
    <scope>GENOME REANNOTATION</scope>
    <source>
        <strain>cv. Nipponbare</strain>
    </source>
</reference>
<reference key="4">
    <citation type="journal article" date="2003" name="Science">
        <title>Collection, mapping, and annotation of over 28,000 cDNA clones from japonica rice.</title>
        <authorList>
            <consortium name="The rice full-length cDNA consortium"/>
        </authorList>
    </citation>
    <scope>NUCLEOTIDE SEQUENCE [LARGE SCALE MRNA] (ISOFORM 2)</scope>
    <source>
        <strain>cv. Nipponbare</strain>
    </source>
</reference>
<reference key="5">
    <citation type="journal article" date="2001" name="Genes Genet. Syst.">
        <title>Auxin response factor family in rice.</title>
        <authorList>
            <person name="Sato Y."/>
            <person name="Nishimura A."/>
            <person name="Ito M."/>
            <person name="Ashikari M."/>
            <person name="Hirano H.-Y."/>
            <person name="Matsuoka M."/>
        </authorList>
    </citation>
    <scope>NUCLEOTIDE SEQUENCE [MRNA] OF 39-1161 (ISOFORM 1)</scope>
    <source>
        <strain>cv. Nipponbare</strain>
    </source>
</reference>
<reference key="6">
    <citation type="journal article" date="2007" name="Gene">
        <title>Genome-wide analysis of the auxin response factors (ARF) gene family in rice (Oryza sativa).</title>
        <authorList>
            <person name="Wang D."/>
            <person name="Pei K."/>
            <person name="Fu Y."/>
            <person name="Sun Z."/>
            <person name="Li S."/>
            <person name="Liu H."/>
            <person name="Tang K."/>
            <person name="Han B."/>
            <person name="Tao Y."/>
        </authorList>
    </citation>
    <scope>GENE FAMILY</scope>
    <scope>TISSUE SPECIFICITY</scope>
    <scope>NOMENCLATURE</scope>
</reference>
<name>ARFS_ORYSJ</name>
<sequence>MMKQAQQQPPPPPASSAATTTTAMAAAAAAAVVGSGCEGEKTKAPAINSELWHACAGPLVSLPPAGSLVVYFPQGHSEQVAASMQKDVDAHVPSYPNLPSKLICLLHNVTLHADPETDEVYAQMTLQPVTSYGKEALQLSELALKQARPQTEFFCKTLTASDTSTHGGFSVPRRAAEKIFPPLDFSMQPPAQELQARDLHDNVWTFRHIYRGQPKRHLLTTGWSLFVSGKRLFAGDSVIFVRDEKQQLLLGIRRANRQPTNISSSVLSSDSMHIGILAAAAHAAANNSPFTIFYNPRASPTEFVIPFAKYQKAVYGNQISLGMRFRMMFETEELGTRRYMGTITGISDLDPVRWKNSQWRNLQVGWDESAAGERRNRVSIWEIEPVAAPFFICPPPFFGAKRPRQLDDESSEMENLLKRAMPWLGEEICIKDPQTQNTIMPGLSLVQWMNMNMQQSSSFANTAMQSEYLRSLSNPNMQNLGAADLSRQLCLQNQLLQQNNIQFNTPKLSQQMQPVNELAKAGIPLNQLGVSTKPQEQIHDASNLQRQQPSMNHMLPLSQAQTNLGQAQVLVQNQMQQQHASSTQGQQPATSQPLLLPQQQQQQQQQQQQQQQQQQQQKLLQQQQQQLLLQQQQQLSKMPAQLSSLANQQFQLTDQQLQLQLLQKLQQQQQSLLSQPAVTLAQLPLIQEQQKLLLDMQQQLSNSQTLSQQQMMPQQSTKVPSQNTPLPLPVQQEPQQKLLQKQAMLADTSEAAVPPTTSVNVISTTGSPLMTTGATHSVLTEEIPSCSTSPSTANGNHLLQPILGRNKHCSMINTEKVPQSAAPMSVPSSLEAVTATPRMMKDSPKLNHNVKQSVVASKLANAGTGSQNYVNNPPPTDYLETASSATSVWLSQNDGLLHQNFPMSNFNQPQMFKDAPPDAEIHAANTSNNALFGINGDGPLGFPIGLGTDDFLSNGIDAAKYENHISTEIDNSYRIPKDAQQEISSSMVSQSFGASDMAFNSIDSTINDGGFLNRSSWPPAAPLKRMRTFTKVYKRGAVGRSIDMSQFSGYDELKHALARMFSIEGQLEERQRIGWKLVYKDHEDDILLLGDDPWEEFVGCVKCIRILSPQEVQQMSLEGCDLGNNIPPNQACSSSDGGNAWRARCDQNSGNPSNGSYEQFE</sequence>
<organism>
    <name type="scientific">Oryza sativa subsp. japonica</name>
    <name type="common">Rice</name>
    <dbReference type="NCBI Taxonomy" id="39947"/>
    <lineage>
        <taxon>Eukaryota</taxon>
        <taxon>Viridiplantae</taxon>
        <taxon>Streptophyta</taxon>
        <taxon>Embryophyta</taxon>
        <taxon>Tracheophyta</taxon>
        <taxon>Spermatophyta</taxon>
        <taxon>Magnoliopsida</taxon>
        <taxon>Liliopsida</taxon>
        <taxon>Poales</taxon>
        <taxon>Poaceae</taxon>
        <taxon>BOP clade</taxon>
        <taxon>Oryzoideae</taxon>
        <taxon>Oryzeae</taxon>
        <taxon>Oryzinae</taxon>
        <taxon>Oryza</taxon>
        <taxon>Oryza sativa</taxon>
    </lineage>
</organism>